<reference key="1">
    <citation type="journal article" date="2005" name="Proc. Natl. Acad. Sci. U.S.A.">
        <title>Complete genome sequence of Vibrio fischeri: a symbiotic bacterium with pathogenic congeners.</title>
        <authorList>
            <person name="Ruby E.G."/>
            <person name="Urbanowski M."/>
            <person name="Campbell J."/>
            <person name="Dunn A."/>
            <person name="Faini M."/>
            <person name="Gunsalus R."/>
            <person name="Lostroh P."/>
            <person name="Lupp C."/>
            <person name="McCann J."/>
            <person name="Millikan D."/>
            <person name="Schaefer A."/>
            <person name="Stabb E."/>
            <person name="Stevens A."/>
            <person name="Visick K."/>
            <person name="Whistler C."/>
            <person name="Greenberg E.P."/>
        </authorList>
    </citation>
    <scope>NUCLEOTIDE SEQUENCE [LARGE SCALE GENOMIC DNA]</scope>
    <source>
        <strain>ATCC 700601 / ES114</strain>
    </source>
</reference>
<dbReference type="EC" id="2.4.1.21" evidence="1"/>
<dbReference type="EMBL" id="CP000021">
    <property type="protein sequence ID" value="AAW87875.1"/>
    <property type="status" value="ALT_INIT"/>
    <property type="molecule type" value="Genomic_DNA"/>
</dbReference>
<dbReference type="RefSeq" id="WP_047863328.1">
    <property type="nucleotide sequence ID" value="NC_006841.2"/>
</dbReference>
<dbReference type="RefSeq" id="YP_206763.1">
    <property type="nucleotide sequence ID" value="NC_006841.2"/>
</dbReference>
<dbReference type="SMR" id="Q5DZC1"/>
<dbReference type="STRING" id="312309.VF_A0805"/>
<dbReference type="CAZy" id="GT5">
    <property type="family name" value="Glycosyltransferase Family 5"/>
</dbReference>
<dbReference type="EnsemblBacteria" id="AAW87875">
    <property type="protein sequence ID" value="AAW87875"/>
    <property type="gene ID" value="VF_A0805"/>
</dbReference>
<dbReference type="GeneID" id="54166124"/>
<dbReference type="KEGG" id="vfi:VF_A0805"/>
<dbReference type="PATRIC" id="fig|312309.11.peg.3407"/>
<dbReference type="eggNOG" id="COG0297">
    <property type="taxonomic scope" value="Bacteria"/>
</dbReference>
<dbReference type="HOGENOM" id="CLU_009583_18_2_6"/>
<dbReference type="OrthoDB" id="9808590at2"/>
<dbReference type="UniPathway" id="UPA00164"/>
<dbReference type="Proteomes" id="UP000000537">
    <property type="component" value="Chromosome II"/>
</dbReference>
<dbReference type="GO" id="GO:0005829">
    <property type="term" value="C:cytosol"/>
    <property type="evidence" value="ECO:0007669"/>
    <property type="project" value="TreeGrafter"/>
</dbReference>
<dbReference type="GO" id="GO:0009011">
    <property type="term" value="F:alpha-1,4-glucan glucosyltransferase (ADP-glucose donor) activity"/>
    <property type="evidence" value="ECO:0007669"/>
    <property type="project" value="UniProtKB-UniRule"/>
</dbReference>
<dbReference type="GO" id="GO:0004373">
    <property type="term" value="F:alpha-1,4-glucan glucosyltransferase (UDP-glucose donor) activity"/>
    <property type="evidence" value="ECO:0007669"/>
    <property type="project" value="InterPro"/>
</dbReference>
<dbReference type="GO" id="GO:0005978">
    <property type="term" value="P:glycogen biosynthetic process"/>
    <property type="evidence" value="ECO:0007669"/>
    <property type="project" value="UniProtKB-UniRule"/>
</dbReference>
<dbReference type="CDD" id="cd03791">
    <property type="entry name" value="GT5_Glycogen_synthase_DULL1-like"/>
    <property type="match status" value="1"/>
</dbReference>
<dbReference type="Gene3D" id="3.40.50.2000">
    <property type="entry name" value="Glycogen Phosphorylase B"/>
    <property type="match status" value="2"/>
</dbReference>
<dbReference type="HAMAP" id="MF_00484">
    <property type="entry name" value="Glycogen_synth"/>
    <property type="match status" value="1"/>
</dbReference>
<dbReference type="InterPro" id="IPR001296">
    <property type="entry name" value="Glyco_trans_1"/>
</dbReference>
<dbReference type="InterPro" id="IPR011835">
    <property type="entry name" value="GS/SS"/>
</dbReference>
<dbReference type="InterPro" id="IPR013534">
    <property type="entry name" value="Starch_synth_cat_dom"/>
</dbReference>
<dbReference type="NCBIfam" id="TIGR02095">
    <property type="entry name" value="glgA"/>
    <property type="match status" value="1"/>
</dbReference>
<dbReference type="NCBIfam" id="NF001903">
    <property type="entry name" value="PRK00654.2-2"/>
    <property type="match status" value="1"/>
</dbReference>
<dbReference type="NCBIfam" id="NF001906">
    <property type="entry name" value="PRK00654.2-5"/>
    <property type="match status" value="1"/>
</dbReference>
<dbReference type="PANTHER" id="PTHR45825:SF11">
    <property type="entry name" value="ALPHA AMYLASE DOMAIN-CONTAINING PROTEIN"/>
    <property type="match status" value="1"/>
</dbReference>
<dbReference type="PANTHER" id="PTHR45825">
    <property type="entry name" value="GRANULE-BOUND STARCH SYNTHASE 1, CHLOROPLASTIC/AMYLOPLASTIC"/>
    <property type="match status" value="1"/>
</dbReference>
<dbReference type="Pfam" id="PF08323">
    <property type="entry name" value="Glyco_transf_5"/>
    <property type="match status" value="1"/>
</dbReference>
<dbReference type="Pfam" id="PF00534">
    <property type="entry name" value="Glycos_transf_1"/>
    <property type="match status" value="1"/>
</dbReference>
<dbReference type="SUPFAM" id="SSF53756">
    <property type="entry name" value="UDP-Glycosyltransferase/glycogen phosphorylase"/>
    <property type="match status" value="1"/>
</dbReference>
<accession>Q5DZC1</accession>
<comment type="function">
    <text evidence="1">Synthesizes alpha-1,4-glucan chains using ADP-glucose.</text>
</comment>
<comment type="catalytic activity">
    <reaction evidence="1">
        <text>[(1-&gt;4)-alpha-D-glucosyl](n) + ADP-alpha-D-glucose = [(1-&gt;4)-alpha-D-glucosyl](n+1) + ADP + H(+)</text>
        <dbReference type="Rhea" id="RHEA:18189"/>
        <dbReference type="Rhea" id="RHEA-COMP:9584"/>
        <dbReference type="Rhea" id="RHEA-COMP:9587"/>
        <dbReference type="ChEBI" id="CHEBI:15378"/>
        <dbReference type="ChEBI" id="CHEBI:15444"/>
        <dbReference type="ChEBI" id="CHEBI:57498"/>
        <dbReference type="ChEBI" id="CHEBI:456216"/>
        <dbReference type="EC" id="2.4.1.21"/>
    </reaction>
</comment>
<comment type="pathway">
    <text evidence="1">Glycan biosynthesis; glycogen biosynthesis.</text>
</comment>
<comment type="similarity">
    <text evidence="1">Belongs to the glycosyltransferase 1 family. Bacterial/plant glycogen synthase subfamily.</text>
</comment>
<comment type="sequence caution" evidence="2">
    <conflict type="erroneous initiation">
        <sequence resource="EMBL-CDS" id="AAW87875"/>
    </conflict>
</comment>
<organism>
    <name type="scientific">Aliivibrio fischeri (strain ATCC 700601 / ES114)</name>
    <name type="common">Vibrio fischeri</name>
    <dbReference type="NCBI Taxonomy" id="312309"/>
    <lineage>
        <taxon>Bacteria</taxon>
        <taxon>Pseudomonadati</taxon>
        <taxon>Pseudomonadota</taxon>
        <taxon>Gammaproteobacteria</taxon>
        <taxon>Vibrionales</taxon>
        <taxon>Vibrionaceae</taxon>
        <taxon>Aliivibrio</taxon>
    </lineage>
</organism>
<proteinExistence type="inferred from homology"/>
<gene>
    <name evidence="1" type="primary">glgA</name>
    <name type="ordered locus">VF_A0805</name>
</gene>
<protein>
    <recommendedName>
        <fullName evidence="1">Glycogen synthase</fullName>
        <ecNumber evidence="1">2.4.1.21</ecNumber>
    </recommendedName>
    <alternativeName>
        <fullName evidence="1">Starch [bacterial glycogen] synthase</fullName>
    </alternativeName>
</protein>
<keyword id="KW-0320">Glycogen biosynthesis</keyword>
<keyword id="KW-0328">Glycosyltransferase</keyword>
<keyword id="KW-1185">Reference proteome</keyword>
<keyword id="KW-0808">Transferase</keyword>
<feature type="chain" id="PRO_0000230271" description="Glycogen synthase">
    <location>
        <begin position="1"/>
        <end position="487"/>
    </location>
</feature>
<feature type="binding site" evidence="1">
    <location>
        <position position="20"/>
    </location>
    <ligand>
        <name>ADP-alpha-D-glucose</name>
        <dbReference type="ChEBI" id="CHEBI:57498"/>
    </ligand>
</feature>
<evidence type="ECO:0000255" key="1">
    <source>
        <dbReference type="HAMAP-Rule" id="MF_00484"/>
    </source>
</evidence>
<evidence type="ECO:0000305" key="2"/>
<name>GLGA_ALIF1</name>
<sequence length="487" mass="54916">MVTKTLSIVFVASEVDGLIKSGGLADVAKALPKSLKELGHSVQIVMPAYKTIAGRDDAEIILTTQLEHWPHTAYQVRSLNVDGIPVFAIESGDYFERAEMYAENNQAYADNGERFAFFSAATLDLLPKLLNKKPDIIHVNDWHTGLIPYLLKKRYVENEFYHQTRSVLSIHNAVFKGIFHYDEIACLSEFKSHFVPEASISHTHVSMLKAGVQCADKINAVSPNYAKELLTELGSHGMASDFQDRESDLIGILNGCDYSEWNPEKDSYIPKQFKVNRISMVRGKKACKAALQQELSLPQKDVAMYGMVCRLTNQKGIQYLLPILEQFLKNDLQLVIVGTGDPVLATRLTEIAQEHSDKFAFVEAYDNKLAHWVEAGSDFFIMPSEFEPCGLNQIYSMAYGTLPIVREVGGLKDSVNNYDDDIENATGFSFKNPEPMELLLVLMRSLLLYSQNLNEVKRVQLHAMKQDFCWNKAALKYIEMYRTAINS</sequence>